<feature type="chain" id="PRO_1000064071" description="2,3-bisphosphoglycerate-dependent phosphoglycerate mutase">
    <location>
        <begin position="1"/>
        <end position="243"/>
    </location>
</feature>
<feature type="active site" description="Tele-phosphohistidine intermediate" evidence="1">
    <location>
        <position position="9"/>
    </location>
</feature>
<feature type="active site" description="Proton donor/acceptor" evidence="1">
    <location>
        <position position="87"/>
    </location>
</feature>
<feature type="binding site" evidence="1">
    <location>
        <begin position="8"/>
        <end position="15"/>
    </location>
    <ligand>
        <name>substrate</name>
    </ligand>
</feature>
<feature type="binding site" evidence="1">
    <location>
        <begin position="21"/>
        <end position="22"/>
    </location>
    <ligand>
        <name>substrate</name>
    </ligand>
</feature>
<feature type="binding site" evidence="1">
    <location>
        <position position="60"/>
    </location>
    <ligand>
        <name>substrate</name>
    </ligand>
</feature>
<feature type="binding site" evidence="1">
    <location>
        <begin position="87"/>
        <end position="90"/>
    </location>
    <ligand>
        <name>substrate</name>
    </ligand>
</feature>
<feature type="binding site" evidence="1">
    <location>
        <position position="98"/>
    </location>
    <ligand>
        <name>substrate</name>
    </ligand>
</feature>
<feature type="binding site" evidence="1">
    <location>
        <begin position="114"/>
        <end position="115"/>
    </location>
    <ligand>
        <name>substrate</name>
    </ligand>
</feature>
<feature type="binding site" evidence="1">
    <location>
        <begin position="183"/>
        <end position="184"/>
    </location>
    <ligand>
        <name>substrate</name>
    </ligand>
</feature>
<feature type="site" description="Transition state stabilizer" evidence="1">
    <location>
        <position position="182"/>
    </location>
</feature>
<name>GPMA_MARMM</name>
<gene>
    <name evidence="1" type="primary">gpmA</name>
    <name type="ordered locus">Mmar10_2498</name>
</gene>
<dbReference type="EC" id="5.4.2.11" evidence="1"/>
<dbReference type="EMBL" id="CP000449">
    <property type="protein sequence ID" value="ABI66784.1"/>
    <property type="molecule type" value="Genomic_DNA"/>
</dbReference>
<dbReference type="RefSeq" id="WP_011644428.1">
    <property type="nucleotide sequence ID" value="NC_008347.1"/>
</dbReference>
<dbReference type="SMR" id="Q0ALQ9"/>
<dbReference type="STRING" id="394221.Mmar10_2498"/>
<dbReference type="KEGG" id="mmr:Mmar10_2498"/>
<dbReference type="eggNOG" id="COG0588">
    <property type="taxonomic scope" value="Bacteria"/>
</dbReference>
<dbReference type="HOGENOM" id="CLU_033323_1_1_5"/>
<dbReference type="OrthoDB" id="9781415at2"/>
<dbReference type="UniPathway" id="UPA00109">
    <property type="reaction ID" value="UER00186"/>
</dbReference>
<dbReference type="Proteomes" id="UP000001964">
    <property type="component" value="Chromosome"/>
</dbReference>
<dbReference type="GO" id="GO:0004619">
    <property type="term" value="F:phosphoglycerate mutase activity"/>
    <property type="evidence" value="ECO:0007669"/>
    <property type="project" value="UniProtKB-EC"/>
</dbReference>
<dbReference type="GO" id="GO:0006094">
    <property type="term" value="P:gluconeogenesis"/>
    <property type="evidence" value="ECO:0007669"/>
    <property type="project" value="UniProtKB-UniRule"/>
</dbReference>
<dbReference type="GO" id="GO:0006096">
    <property type="term" value="P:glycolytic process"/>
    <property type="evidence" value="ECO:0007669"/>
    <property type="project" value="UniProtKB-UniRule"/>
</dbReference>
<dbReference type="CDD" id="cd07067">
    <property type="entry name" value="HP_PGM_like"/>
    <property type="match status" value="1"/>
</dbReference>
<dbReference type="FunFam" id="3.40.50.1240:FF:000003">
    <property type="entry name" value="2,3-bisphosphoglycerate-dependent phosphoglycerate mutase"/>
    <property type="match status" value="1"/>
</dbReference>
<dbReference type="Gene3D" id="3.40.50.1240">
    <property type="entry name" value="Phosphoglycerate mutase-like"/>
    <property type="match status" value="1"/>
</dbReference>
<dbReference type="HAMAP" id="MF_01039">
    <property type="entry name" value="PGAM_GpmA"/>
    <property type="match status" value="1"/>
</dbReference>
<dbReference type="InterPro" id="IPR013078">
    <property type="entry name" value="His_Pase_superF_clade-1"/>
</dbReference>
<dbReference type="InterPro" id="IPR029033">
    <property type="entry name" value="His_PPase_superfam"/>
</dbReference>
<dbReference type="InterPro" id="IPR001345">
    <property type="entry name" value="PG/BPGM_mutase_AS"/>
</dbReference>
<dbReference type="InterPro" id="IPR005952">
    <property type="entry name" value="Phosphogly_mut1"/>
</dbReference>
<dbReference type="NCBIfam" id="TIGR01258">
    <property type="entry name" value="pgm_1"/>
    <property type="match status" value="1"/>
</dbReference>
<dbReference type="NCBIfam" id="NF010713">
    <property type="entry name" value="PRK14115.1"/>
    <property type="match status" value="1"/>
</dbReference>
<dbReference type="PANTHER" id="PTHR11931">
    <property type="entry name" value="PHOSPHOGLYCERATE MUTASE"/>
    <property type="match status" value="1"/>
</dbReference>
<dbReference type="Pfam" id="PF00300">
    <property type="entry name" value="His_Phos_1"/>
    <property type="match status" value="1"/>
</dbReference>
<dbReference type="SMART" id="SM00855">
    <property type="entry name" value="PGAM"/>
    <property type="match status" value="1"/>
</dbReference>
<dbReference type="SUPFAM" id="SSF53254">
    <property type="entry name" value="Phosphoglycerate mutase-like"/>
    <property type="match status" value="1"/>
</dbReference>
<dbReference type="PROSITE" id="PS00175">
    <property type="entry name" value="PG_MUTASE"/>
    <property type="match status" value="1"/>
</dbReference>
<protein>
    <recommendedName>
        <fullName evidence="1">2,3-bisphosphoglycerate-dependent phosphoglycerate mutase</fullName>
        <shortName evidence="1">BPG-dependent PGAM</shortName>
        <shortName evidence="1">PGAM</shortName>
        <shortName evidence="1">Phosphoglyceromutase</shortName>
        <shortName evidence="1">dPGM</shortName>
        <ecNumber evidence="1">5.4.2.11</ecNumber>
    </recommendedName>
</protein>
<proteinExistence type="inferred from homology"/>
<reference key="1">
    <citation type="submission" date="2006-08" db="EMBL/GenBank/DDBJ databases">
        <title>Complete sequence of Maricaulis maris MCS10.</title>
        <authorList>
            <consortium name="US DOE Joint Genome Institute"/>
            <person name="Copeland A."/>
            <person name="Lucas S."/>
            <person name="Lapidus A."/>
            <person name="Barry K."/>
            <person name="Detter J.C."/>
            <person name="Glavina del Rio T."/>
            <person name="Hammon N."/>
            <person name="Israni S."/>
            <person name="Dalin E."/>
            <person name="Tice H."/>
            <person name="Pitluck S."/>
            <person name="Saunders E."/>
            <person name="Brettin T."/>
            <person name="Bruce D."/>
            <person name="Han C."/>
            <person name="Tapia R."/>
            <person name="Gilna P."/>
            <person name="Schmutz J."/>
            <person name="Larimer F."/>
            <person name="Land M."/>
            <person name="Hauser L."/>
            <person name="Kyrpides N."/>
            <person name="Mikhailova N."/>
            <person name="Viollier P."/>
            <person name="Stephens C."/>
            <person name="Richardson P."/>
        </authorList>
    </citation>
    <scope>NUCLEOTIDE SEQUENCE [LARGE SCALE GENOMIC DNA]</scope>
    <source>
        <strain>MCS10</strain>
    </source>
</reference>
<organism>
    <name type="scientific">Maricaulis maris (strain MCS10)</name>
    <name type="common">Caulobacter maris</name>
    <dbReference type="NCBI Taxonomy" id="394221"/>
    <lineage>
        <taxon>Bacteria</taxon>
        <taxon>Pseudomonadati</taxon>
        <taxon>Pseudomonadota</taxon>
        <taxon>Alphaproteobacteria</taxon>
        <taxon>Maricaulales</taxon>
        <taxon>Maricaulaceae</taxon>
        <taxon>Maricaulis</taxon>
    </lineage>
</organism>
<keyword id="KW-0312">Gluconeogenesis</keyword>
<keyword id="KW-0324">Glycolysis</keyword>
<keyword id="KW-0413">Isomerase</keyword>
<keyword id="KW-1185">Reference proteome</keyword>
<sequence>MPQLALIRHGQSEWNLQNRFTGWVDVDLTDEGVAQARQSGELLAKAGFEPTHAFVSVLKRAIKTLNFTLEGLDRLWIPVDKSWRLNERHYGALAGLDKNETRAKHGDEQVKIWRRSFDTPPPPVATDHAYHPLNDHRYADVPRELLPASESLKSTLDRVEPYWSSSIQPRLAAGETLIVAAHGNSLRALVKLLFKVSDPDIMEVEVPTGNPLLIDLEDDGITLRSARYLDPVRAKPLPPLPGA</sequence>
<accession>Q0ALQ9</accession>
<comment type="function">
    <text evidence="1">Catalyzes the interconversion of 2-phosphoglycerate and 3-phosphoglycerate.</text>
</comment>
<comment type="catalytic activity">
    <reaction evidence="1">
        <text>(2R)-2-phosphoglycerate = (2R)-3-phosphoglycerate</text>
        <dbReference type="Rhea" id="RHEA:15901"/>
        <dbReference type="ChEBI" id="CHEBI:58272"/>
        <dbReference type="ChEBI" id="CHEBI:58289"/>
        <dbReference type="EC" id="5.4.2.11"/>
    </reaction>
</comment>
<comment type="pathway">
    <text evidence="1">Carbohydrate degradation; glycolysis; pyruvate from D-glyceraldehyde 3-phosphate: step 3/5.</text>
</comment>
<comment type="subunit">
    <text evidence="1">Homodimer.</text>
</comment>
<comment type="similarity">
    <text evidence="1">Belongs to the phosphoglycerate mutase family. BPG-dependent PGAM subfamily.</text>
</comment>
<evidence type="ECO:0000255" key="1">
    <source>
        <dbReference type="HAMAP-Rule" id="MF_01039"/>
    </source>
</evidence>